<proteinExistence type="inferred from homology"/>
<dbReference type="EC" id="1.11.1.21" evidence="1"/>
<dbReference type="EMBL" id="CU459141">
    <property type="protein sequence ID" value="CAM88162.1"/>
    <property type="molecule type" value="Genomic_DNA"/>
</dbReference>
<dbReference type="RefSeq" id="WP_000064284.1">
    <property type="nucleotide sequence ID" value="NZ_JBDGFB010000003.1"/>
</dbReference>
<dbReference type="SMR" id="B0V4K1"/>
<dbReference type="EnsemblBacteria" id="CAM88162">
    <property type="protein sequence ID" value="CAM88162"/>
    <property type="gene ID" value="ABAYE3366"/>
</dbReference>
<dbReference type="KEGG" id="aby:ABAYE3366"/>
<dbReference type="HOGENOM" id="CLU_025424_2_0_6"/>
<dbReference type="GO" id="GO:0005829">
    <property type="term" value="C:cytosol"/>
    <property type="evidence" value="ECO:0007669"/>
    <property type="project" value="TreeGrafter"/>
</dbReference>
<dbReference type="GO" id="GO:0004096">
    <property type="term" value="F:catalase activity"/>
    <property type="evidence" value="ECO:0007669"/>
    <property type="project" value="UniProtKB-UniRule"/>
</dbReference>
<dbReference type="GO" id="GO:0020037">
    <property type="term" value="F:heme binding"/>
    <property type="evidence" value="ECO:0007669"/>
    <property type="project" value="InterPro"/>
</dbReference>
<dbReference type="GO" id="GO:0046872">
    <property type="term" value="F:metal ion binding"/>
    <property type="evidence" value="ECO:0007669"/>
    <property type="project" value="UniProtKB-KW"/>
</dbReference>
<dbReference type="GO" id="GO:0070301">
    <property type="term" value="P:cellular response to hydrogen peroxide"/>
    <property type="evidence" value="ECO:0007669"/>
    <property type="project" value="TreeGrafter"/>
</dbReference>
<dbReference type="GO" id="GO:0042744">
    <property type="term" value="P:hydrogen peroxide catabolic process"/>
    <property type="evidence" value="ECO:0007669"/>
    <property type="project" value="UniProtKB-KW"/>
</dbReference>
<dbReference type="FunFam" id="1.10.420.10:FF:000002">
    <property type="entry name" value="Catalase-peroxidase"/>
    <property type="match status" value="1"/>
</dbReference>
<dbReference type="FunFam" id="1.10.420.10:FF:000004">
    <property type="entry name" value="Catalase-peroxidase"/>
    <property type="match status" value="1"/>
</dbReference>
<dbReference type="FunFam" id="1.10.520.10:FF:000002">
    <property type="entry name" value="Catalase-peroxidase"/>
    <property type="match status" value="1"/>
</dbReference>
<dbReference type="Gene3D" id="1.10.520.10">
    <property type="match status" value="2"/>
</dbReference>
<dbReference type="Gene3D" id="1.10.420.10">
    <property type="entry name" value="Peroxidase, domain 2"/>
    <property type="match status" value="2"/>
</dbReference>
<dbReference type="HAMAP" id="MF_01961">
    <property type="entry name" value="Catal_peroxid"/>
    <property type="match status" value="1"/>
</dbReference>
<dbReference type="InterPro" id="IPR000763">
    <property type="entry name" value="Catalase_peroxidase"/>
</dbReference>
<dbReference type="InterPro" id="IPR002016">
    <property type="entry name" value="Haem_peroxidase"/>
</dbReference>
<dbReference type="InterPro" id="IPR010255">
    <property type="entry name" value="Haem_peroxidase_sf"/>
</dbReference>
<dbReference type="InterPro" id="IPR019794">
    <property type="entry name" value="Peroxidases_AS"/>
</dbReference>
<dbReference type="NCBIfam" id="TIGR00198">
    <property type="entry name" value="cat_per_HPI"/>
    <property type="match status" value="1"/>
</dbReference>
<dbReference type="NCBIfam" id="NF011635">
    <property type="entry name" value="PRK15061.1"/>
    <property type="match status" value="1"/>
</dbReference>
<dbReference type="PANTHER" id="PTHR30555:SF0">
    <property type="entry name" value="CATALASE-PEROXIDASE"/>
    <property type="match status" value="1"/>
</dbReference>
<dbReference type="PANTHER" id="PTHR30555">
    <property type="entry name" value="HYDROPEROXIDASE I, BIFUNCTIONAL CATALASE-PEROXIDASE"/>
    <property type="match status" value="1"/>
</dbReference>
<dbReference type="Pfam" id="PF00141">
    <property type="entry name" value="peroxidase"/>
    <property type="match status" value="2"/>
</dbReference>
<dbReference type="PRINTS" id="PR00460">
    <property type="entry name" value="BPEROXIDASE"/>
</dbReference>
<dbReference type="PRINTS" id="PR00458">
    <property type="entry name" value="PEROXIDASE"/>
</dbReference>
<dbReference type="SUPFAM" id="SSF48113">
    <property type="entry name" value="Heme-dependent peroxidases"/>
    <property type="match status" value="2"/>
</dbReference>
<dbReference type="PROSITE" id="PS00436">
    <property type="entry name" value="PEROXIDASE_2"/>
    <property type="match status" value="1"/>
</dbReference>
<dbReference type="PROSITE" id="PS50873">
    <property type="entry name" value="PEROXIDASE_4"/>
    <property type="match status" value="1"/>
</dbReference>
<sequence length="718" mass="78629">MSNESKCPFSGHNSKPQVTVGGGTANLHWWPNQLRVDLLNQHSERSNPLGKDFNYRQEFKKLDYYALKADIKNVLTDSQDWWPADWGNYTGLFIRLAWHAAGTYRMGDGRGGAGRGQQRFAPLNSWPDNASLDKARRLLWPVKQKYGQKISWADLFILAGNIALESSGFRTFGFGAGREDVWEPDNDVNWGDEKEWLAHRNSEALAGSNLAATEMGLIYVNPEGPQASGDPRSAAPFIRATFGNMAMDDEEIVALIAGGHTLGKTHGAAPADHVQADPEGAPIEQMGFGWANSYGTGVGKDAITSGLEVIWSQTPTQWSNYFFENLFKYEWVQERSPAGAIQWVAADAEAIIPDPFDPSIKRKPTMLTTDLTLRFDPEFEKISRRFLNDPQAFANAFARAWFKLTHRDMGPKARYLGPEVPTEDLIWQDPLPAASATPSSASIADAKAKIVALGLPAGELVSLAWASASTFRGGDKRGGANGARIALSPQREWEVNKKAVETLTKIEELKASTQLSLADLIVLAGNVGVEQAAQAAGFNITVPFAPGRVDALQSQTDVESFQLLLGLADGFRNWKKQGVNTPAEVLLIDKAQQLTLTAPELTALIGGLRVLGTNWDGSQHGVFTQQVGVLSTDFFTNLLDMSNVWAPVDSTSEVFEGKDRKSGTVKFTATRNDLVFGSNSILRALAEVYAQADGKEKFVQDFVAAWTKVMNLDRFDLA</sequence>
<organism>
    <name type="scientific">Acinetobacter baumannii (strain AYE)</name>
    <dbReference type="NCBI Taxonomy" id="509173"/>
    <lineage>
        <taxon>Bacteria</taxon>
        <taxon>Pseudomonadati</taxon>
        <taxon>Pseudomonadota</taxon>
        <taxon>Gammaproteobacteria</taxon>
        <taxon>Moraxellales</taxon>
        <taxon>Moraxellaceae</taxon>
        <taxon>Acinetobacter</taxon>
        <taxon>Acinetobacter calcoaceticus/baumannii complex</taxon>
    </lineage>
</organism>
<evidence type="ECO:0000255" key="1">
    <source>
        <dbReference type="HAMAP-Rule" id="MF_01961"/>
    </source>
</evidence>
<name>KATG_ACIBY</name>
<feature type="chain" id="PRO_0000354713" description="Catalase-peroxidase">
    <location>
        <begin position="1"/>
        <end position="718"/>
    </location>
</feature>
<feature type="active site" description="Proton acceptor" evidence="1">
    <location>
        <position position="99"/>
    </location>
</feature>
<feature type="binding site" description="axial binding residue" evidence="1">
    <location>
        <position position="260"/>
    </location>
    <ligand>
        <name>heme b</name>
        <dbReference type="ChEBI" id="CHEBI:60344"/>
    </ligand>
    <ligandPart>
        <name>Fe</name>
        <dbReference type="ChEBI" id="CHEBI:18248"/>
    </ligandPart>
</feature>
<feature type="site" description="Transition state stabilizer" evidence="1">
    <location>
        <position position="95"/>
    </location>
</feature>
<feature type="cross-link" description="Tryptophyl-tyrosyl-methioninium (Trp-Tyr) (with M-245)" evidence="1">
    <location>
        <begin position="98"/>
        <end position="219"/>
    </location>
</feature>
<feature type="cross-link" description="Tryptophyl-tyrosyl-methioninium (Tyr-Met) (with W-98)" evidence="1">
    <location>
        <begin position="219"/>
        <end position="245"/>
    </location>
</feature>
<keyword id="KW-0349">Heme</keyword>
<keyword id="KW-0376">Hydrogen peroxide</keyword>
<keyword id="KW-0408">Iron</keyword>
<keyword id="KW-0479">Metal-binding</keyword>
<keyword id="KW-0560">Oxidoreductase</keyword>
<keyword id="KW-0575">Peroxidase</keyword>
<comment type="function">
    <text evidence="1">Bifunctional enzyme with both catalase and broad-spectrum peroxidase activity.</text>
</comment>
<comment type="catalytic activity">
    <reaction evidence="1">
        <text>H2O2 + AH2 = A + 2 H2O</text>
        <dbReference type="Rhea" id="RHEA:30275"/>
        <dbReference type="ChEBI" id="CHEBI:13193"/>
        <dbReference type="ChEBI" id="CHEBI:15377"/>
        <dbReference type="ChEBI" id="CHEBI:16240"/>
        <dbReference type="ChEBI" id="CHEBI:17499"/>
        <dbReference type="EC" id="1.11.1.21"/>
    </reaction>
</comment>
<comment type="catalytic activity">
    <reaction evidence="1">
        <text>2 H2O2 = O2 + 2 H2O</text>
        <dbReference type="Rhea" id="RHEA:20309"/>
        <dbReference type="ChEBI" id="CHEBI:15377"/>
        <dbReference type="ChEBI" id="CHEBI:15379"/>
        <dbReference type="ChEBI" id="CHEBI:16240"/>
        <dbReference type="EC" id="1.11.1.21"/>
    </reaction>
</comment>
<comment type="cofactor">
    <cofactor evidence="1">
        <name>heme b</name>
        <dbReference type="ChEBI" id="CHEBI:60344"/>
    </cofactor>
    <text evidence="1">Binds 1 heme b (iron(II)-protoporphyrin IX) group per dimer.</text>
</comment>
<comment type="subunit">
    <text evidence="1">Homodimer or homotetramer.</text>
</comment>
<comment type="PTM">
    <text evidence="1">Formation of the three residue Trp-Tyr-Met cross-link is important for the catalase, but not the peroxidase activity of the enzyme.</text>
</comment>
<comment type="similarity">
    <text evidence="1">Belongs to the peroxidase family. Peroxidase/catalase subfamily.</text>
</comment>
<reference key="1">
    <citation type="journal article" date="2008" name="PLoS ONE">
        <title>Comparative analysis of Acinetobacters: three genomes for three lifestyles.</title>
        <authorList>
            <person name="Vallenet D."/>
            <person name="Nordmann P."/>
            <person name="Barbe V."/>
            <person name="Poirel L."/>
            <person name="Mangenot S."/>
            <person name="Bataille E."/>
            <person name="Dossat C."/>
            <person name="Gas S."/>
            <person name="Kreimeyer A."/>
            <person name="Lenoble P."/>
            <person name="Oztas S."/>
            <person name="Poulain J."/>
            <person name="Segurens B."/>
            <person name="Robert C."/>
            <person name="Abergel C."/>
            <person name="Claverie J.-M."/>
            <person name="Raoult D."/>
            <person name="Medigue C."/>
            <person name="Weissenbach J."/>
            <person name="Cruveiller S."/>
        </authorList>
    </citation>
    <scope>NUCLEOTIDE SEQUENCE [LARGE SCALE GENOMIC DNA]</scope>
    <source>
        <strain>AYE</strain>
    </source>
</reference>
<protein>
    <recommendedName>
        <fullName evidence="1">Catalase-peroxidase</fullName>
        <shortName evidence="1">CP</shortName>
        <ecNumber evidence="1">1.11.1.21</ecNumber>
    </recommendedName>
    <alternativeName>
        <fullName evidence="1">Peroxidase/catalase</fullName>
    </alternativeName>
</protein>
<gene>
    <name evidence="1" type="primary">katG</name>
    <name type="ordered locus">ABAYE3366</name>
</gene>
<accession>B0V4K1</accession>